<organism>
    <name type="scientific">Chlamydia trachomatis serovar L2b (strain UCH-1/proctitis)</name>
    <dbReference type="NCBI Taxonomy" id="471473"/>
    <lineage>
        <taxon>Bacteria</taxon>
        <taxon>Pseudomonadati</taxon>
        <taxon>Chlamydiota</taxon>
        <taxon>Chlamydiia</taxon>
        <taxon>Chlamydiales</taxon>
        <taxon>Chlamydiaceae</taxon>
        <taxon>Chlamydia/Chlamydophila group</taxon>
        <taxon>Chlamydia</taxon>
    </lineage>
</organism>
<feature type="chain" id="PRO_1000123132" description="Glycerol-3-phosphate dehydrogenase [NAD(P)+]">
    <location>
        <begin position="1"/>
        <end position="334"/>
    </location>
</feature>
<feature type="active site" description="Proton acceptor" evidence="1">
    <location>
        <position position="192"/>
    </location>
</feature>
<feature type="binding site" evidence="1">
    <location>
        <position position="13"/>
    </location>
    <ligand>
        <name>NADPH</name>
        <dbReference type="ChEBI" id="CHEBI:57783"/>
    </ligand>
</feature>
<feature type="binding site" evidence="1">
    <location>
        <position position="33"/>
    </location>
    <ligand>
        <name>NADPH</name>
        <dbReference type="ChEBI" id="CHEBI:57783"/>
    </ligand>
</feature>
<feature type="binding site" evidence="1">
    <location>
        <position position="106"/>
    </location>
    <ligand>
        <name>NADPH</name>
        <dbReference type="ChEBI" id="CHEBI:57783"/>
    </ligand>
</feature>
<feature type="binding site" evidence="1">
    <location>
        <position position="106"/>
    </location>
    <ligand>
        <name>sn-glycerol 3-phosphate</name>
        <dbReference type="ChEBI" id="CHEBI:57597"/>
    </ligand>
</feature>
<feature type="binding site" evidence="1">
    <location>
        <position position="137"/>
    </location>
    <ligand>
        <name>sn-glycerol 3-phosphate</name>
        <dbReference type="ChEBI" id="CHEBI:57597"/>
    </ligand>
</feature>
<feature type="binding site" evidence="1">
    <location>
        <position position="139"/>
    </location>
    <ligand>
        <name>sn-glycerol 3-phosphate</name>
        <dbReference type="ChEBI" id="CHEBI:57597"/>
    </ligand>
</feature>
<feature type="binding site" evidence="1">
    <location>
        <position position="141"/>
    </location>
    <ligand>
        <name>NADPH</name>
        <dbReference type="ChEBI" id="CHEBI:57783"/>
    </ligand>
</feature>
<feature type="binding site" evidence="1">
    <location>
        <position position="192"/>
    </location>
    <ligand>
        <name>sn-glycerol 3-phosphate</name>
        <dbReference type="ChEBI" id="CHEBI:57597"/>
    </ligand>
</feature>
<feature type="binding site" evidence="1">
    <location>
        <position position="245"/>
    </location>
    <ligand>
        <name>sn-glycerol 3-phosphate</name>
        <dbReference type="ChEBI" id="CHEBI:57597"/>
    </ligand>
</feature>
<feature type="binding site" evidence="1">
    <location>
        <position position="255"/>
    </location>
    <ligand>
        <name>sn-glycerol 3-phosphate</name>
        <dbReference type="ChEBI" id="CHEBI:57597"/>
    </ligand>
</feature>
<feature type="binding site" evidence="1">
    <location>
        <position position="256"/>
    </location>
    <ligand>
        <name>NADPH</name>
        <dbReference type="ChEBI" id="CHEBI:57783"/>
    </ligand>
</feature>
<feature type="binding site" evidence="1">
    <location>
        <position position="256"/>
    </location>
    <ligand>
        <name>sn-glycerol 3-phosphate</name>
        <dbReference type="ChEBI" id="CHEBI:57597"/>
    </ligand>
</feature>
<feature type="binding site" evidence="1">
    <location>
        <position position="257"/>
    </location>
    <ligand>
        <name>sn-glycerol 3-phosphate</name>
        <dbReference type="ChEBI" id="CHEBI:57597"/>
    </ligand>
</feature>
<feature type="binding site" evidence="1">
    <location>
        <position position="280"/>
    </location>
    <ligand>
        <name>NADPH</name>
        <dbReference type="ChEBI" id="CHEBI:57783"/>
    </ligand>
</feature>
<feature type="binding site" evidence="1">
    <location>
        <position position="282"/>
    </location>
    <ligand>
        <name>NADPH</name>
        <dbReference type="ChEBI" id="CHEBI:57783"/>
    </ligand>
</feature>
<protein>
    <recommendedName>
        <fullName evidence="1">Glycerol-3-phosphate dehydrogenase [NAD(P)+]</fullName>
        <ecNumber evidence="1">1.1.1.94</ecNumber>
    </recommendedName>
    <alternativeName>
        <fullName evidence="1">NAD(P)(+)-dependent glycerol-3-phosphate dehydrogenase</fullName>
    </alternativeName>
    <alternativeName>
        <fullName evidence="1">NAD(P)H-dependent dihydroxyacetone-phosphate reductase</fullName>
    </alternativeName>
</protein>
<sequence>MKETIAYLGMGMWGFSLANLLANNGHRVVGWARNPALIEQLSVQRRHPAAPHISIPQNLSFTSHMEEALDGATMIVEGVTSAGMRPVLTQLKALTELRVPLVITSKGIEQNTGLLLSEIALEIFGRPAAQHLGYLSGPSIASEVLRGCPCSVVISAYNPDTLKQIHRAFLTPTFRVYPNSDLKGVALGGALKNVIAIACGISDGFRFGDNAKSGLVTRGLHEIRKFATIMGCRPDTLNGLAGLGDLCTTCFSAFSRNTLFGKLLAEGLTPEQAKTKIGMVVEGVYTALSAHQIATHHRIDMPITTSVYRVLYENLDIQEGIAQLLQRDTKEEYL</sequence>
<dbReference type="EC" id="1.1.1.94" evidence="1"/>
<dbReference type="EMBL" id="AM884177">
    <property type="protein sequence ID" value="CAP06481.1"/>
    <property type="molecule type" value="Genomic_DNA"/>
</dbReference>
<dbReference type="RefSeq" id="WP_009872869.1">
    <property type="nucleotide sequence ID" value="NC_010280.2"/>
</dbReference>
<dbReference type="SMR" id="B0BAG9"/>
<dbReference type="KEGG" id="ctl:CTLon_0083"/>
<dbReference type="HOGENOM" id="CLU_033449_0_2_0"/>
<dbReference type="UniPathway" id="UPA00940"/>
<dbReference type="Proteomes" id="UP001154401">
    <property type="component" value="Chromosome"/>
</dbReference>
<dbReference type="GO" id="GO:0005829">
    <property type="term" value="C:cytosol"/>
    <property type="evidence" value="ECO:0007669"/>
    <property type="project" value="TreeGrafter"/>
</dbReference>
<dbReference type="GO" id="GO:0047952">
    <property type="term" value="F:glycerol-3-phosphate dehydrogenase [NAD(P)+] activity"/>
    <property type="evidence" value="ECO:0007669"/>
    <property type="project" value="UniProtKB-UniRule"/>
</dbReference>
<dbReference type="GO" id="GO:0051287">
    <property type="term" value="F:NAD binding"/>
    <property type="evidence" value="ECO:0007669"/>
    <property type="project" value="InterPro"/>
</dbReference>
<dbReference type="GO" id="GO:0005975">
    <property type="term" value="P:carbohydrate metabolic process"/>
    <property type="evidence" value="ECO:0007669"/>
    <property type="project" value="InterPro"/>
</dbReference>
<dbReference type="GO" id="GO:0046167">
    <property type="term" value="P:glycerol-3-phosphate biosynthetic process"/>
    <property type="evidence" value="ECO:0007669"/>
    <property type="project" value="UniProtKB-UniRule"/>
</dbReference>
<dbReference type="GO" id="GO:0046168">
    <property type="term" value="P:glycerol-3-phosphate catabolic process"/>
    <property type="evidence" value="ECO:0007669"/>
    <property type="project" value="InterPro"/>
</dbReference>
<dbReference type="GO" id="GO:0006650">
    <property type="term" value="P:glycerophospholipid metabolic process"/>
    <property type="evidence" value="ECO:0007669"/>
    <property type="project" value="UniProtKB-UniRule"/>
</dbReference>
<dbReference type="GO" id="GO:0008654">
    <property type="term" value="P:phospholipid biosynthetic process"/>
    <property type="evidence" value="ECO:0007669"/>
    <property type="project" value="UniProtKB-KW"/>
</dbReference>
<dbReference type="FunFam" id="1.10.1040.10:FF:000001">
    <property type="entry name" value="Glycerol-3-phosphate dehydrogenase [NAD(P)+]"/>
    <property type="match status" value="1"/>
</dbReference>
<dbReference type="Gene3D" id="1.10.1040.10">
    <property type="entry name" value="N-(1-d-carboxylethyl)-l-norvaline Dehydrogenase, domain 2"/>
    <property type="match status" value="1"/>
</dbReference>
<dbReference type="Gene3D" id="3.40.50.720">
    <property type="entry name" value="NAD(P)-binding Rossmann-like Domain"/>
    <property type="match status" value="1"/>
</dbReference>
<dbReference type="HAMAP" id="MF_00394">
    <property type="entry name" value="NAD_Glyc3P_dehydrog"/>
    <property type="match status" value="1"/>
</dbReference>
<dbReference type="InterPro" id="IPR008927">
    <property type="entry name" value="6-PGluconate_DH-like_C_sf"/>
</dbReference>
<dbReference type="InterPro" id="IPR013328">
    <property type="entry name" value="6PGD_dom2"/>
</dbReference>
<dbReference type="InterPro" id="IPR006168">
    <property type="entry name" value="G3P_DH_NAD-dep"/>
</dbReference>
<dbReference type="InterPro" id="IPR006109">
    <property type="entry name" value="G3P_DH_NAD-dep_C"/>
</dbReference>
<dbReference type="InterPro" id="IPR011128">
    <property type="entry name" value="G3P_DH_NAD-dep_N"/>
</dbReference>
<dbReference type="InterPro" id="IPR036291">
    <property type="entry name" value="NAD(P)-bd_dom_sf"/>
</dbReference>
<dbReference type="NCBIfam" id="NF000940">
    <property type="entry name" value="PRK00094.1-2"/>
    <property type="match status" value="1"/>
</dbReference>
<dbReference type="NCBIfam" id="NF000942">
    <property type="entry name" value="PRK00094.1-4"/>
    <property type="match status" value="1"/>
</dbReference>
<dbReference type="PANTHER" id="PTHR11728">
    <property type="entry name" value="GLYCEROL-3-PHOSPHATE DEHYDROGENASE"/>
    <property type="match status" value="1"/>
</dbReference>
<dbReference type="PANTHER" id="PTHR11728:SF1">
    <property type="entry name" value="GLYCEROL-3-PHOSPHATE DEHYDROGENASE [NAD(+)] 2, CHLOROPLASTIC"/>
    <property type="match status" value="1"/>
</dbReference>
<dbReference type="Pfam" id="PF07479">
    <property type="entry name" value="NAD_Gly3P_dh_C"/>
    <property type="match status" value="1"/>
</dbReference>
<dbReference type="Pfam" id="PF01210">
    <property type="entry name" value="NAD_Gly3P_dh_N"/>
    <property type="match status" value="1"/>
</dbReference>
<dbReference type="PIRSF" id="PIRSF000114">
    <property type="entry name" value="Glycerol-3-P_dh"/>
    <property type="match status" value="1"/>
</dbReference>
<dbReference type="PRINTS" id="PR00077">
    <property type="entry name" value="GPDHDRGNASE"/>
</dbReference>
<dbReference type="SUPFAM" id="SSF48179">
    <property type="entry name" value="6-phosphogluconate dehydrogenase C-terminal domain-like"/>
    <property type="match status" value="1"/>
</dbReference>
<dbReference type="SUPFAM" id="SSF51735">
    <property type="entry name" value="NAD(P)-binding Rossmann-fold domains"/>
    <property type="match status" value="1"/>
</dbReference>
<dbReference type="PROSITE" id="PS00957">
    <property type="entry name" value="NAD_G3PDH"/>
    <property type="match status" value="1"/>
</dbReference>
<gene>
    <name evidence="1" type="primary">gpsA</name>
    <name type="ordered locus">CTLon_0083</name>
</gene>
<comment type="function">
    <text evidence="1">Catalyzes the reduction of the glycolytic intermediate dihydroxyacetone phosphate (DHAP) to sn-glycerol 3-phosphate (G3P), the key precursor for phospholipid synthesis.</text>
</comment>
<comment type="catalytic activity">
    <reaction evidence="1">
        <text>sn-glycerol 3-phosphate + NAD(+) = dihydroxyacetone phosphate + NADH + H(+)</text>
        <dbReference type="Rhea" id="RHEA:11092"/>
        <dbReference type="ChEBI" id="CHEBI:15378"/>
        <dbReference type="ChEBI" id="CHEBI:57540"/>
        <dbReference type="ChEBI" id="CHEBI:57597"/>
        <dbReference type="ChEBI" id="CHEBI:57642"/>
        <dbReference type="ChEBI" id="CHEBI:57945"/>
        <dbReference type="EC" id="1.1.1.94"/>
    </reaction>
    <physiologicalReaction direction="right-to-left" evidence="1">
        <dbReference type="Rhea" id="RHEA:11094"/>
    </physiologicalReaction>
</comment>
<comment type="catalytic activity">
    <reaction evidence="1">
        <text>sn-glycerol 3-phosphate + NADP(+) = dihydroxyacetone phosphate + NADPH + H(+)</text>
        <dbReference type="Rhea" id="RHEA:11096"/>
        <dbReference type="ChEBI" id="CHEBI:15378"/>
        <dbReference type="ChEBI" id="CHEBI:57597"/>
        <dbReference type="ChEBI" id="CHEBI:57642"/>
        <dbReference type="ChEBI" id="CHEBI:57783"/>
        <dbReference type="ChEBI" id="CHEBI:58349"/>
        <dbReference type="EC" id="1.1.1.94"/>
    </reaction>
    <physiologicalReaction direction="right-to-left" evidence="1">
        <dbReference type="Rhea" id="RHEA:11098"/>
    </physiologicalReaction>
</comment>
<comment type="pathway">
    <text evidence="1">Membrane lipid metabolism; glycerophospholipid metabolism.</text>
</comment>
<comment type="subcellular location">
    <subcellularLocation>
        <location evidence="1">Cytoplasm</location>
    </subcellularLocation>
</comment>
<comment type="similarity">
    <text evidence="1">Belongs to the NAD-dependent glycerol-3-phosphate dehydrogenase family.</text>
</comment>
<proteinExistence type="inferred from homology"/>
<reference key="1">
    <citation type="journal article" date="2008" name="Genome Res.">
        <title>Chlamydia trachomatis: genome sequence analysis of lymphogranuloma venereum isolates.</title>
        <authorList>
            <person name="Thomson N.R."/>
            <person name="Holden M.T.G."/>
            <person name="Carder C."/>
            <person name="Lennard N."/>
            <person name="Lockey S.J."/>
            <person name="Marsh P."/>
            <person name="Skipp P."/>
            <person name="O'Connor C.D."/>
            <person name="Goodhead I."/>
            <person name="Norbertzcak H."/>
            <person name="Harris B."/>
            <person name="Ormond D."/>
            <person name="Rance R."/>
            <person name="Quail M.A."/>
            <person name="Parkhill J."/>
            <person name="Stephens R.S."/>
            <person name="Clarke I.N."/>
        </authorList>
    </citation>
    <scope>NUCLEOTIDE SEQUENCE [LARGE SCALE GENOMIC DNA]</scope>
    <source>
        <strain>UCH-1/proctitis</strain>
    </source>
</reference>
<name>GPDA_CHLTB</name>
<keyword id="KW-0963">Cytoplasm</keyword>
<keyword id="KW-0444">Lipid biosynthesis</keyword>
<keyword id="KW-0443">Lipid metabolism</keyword>
<keyword id="KW-0520">NAD</keyword>
<keyword id="KW-0521">NADP</keyword>
<keyword id="KW-0547">Nucleotide-binding</keyword>
<keyword id="KW-0560">Oxidoreductase</keyword>
<keyword id="KW-0594">Phospholipid biosynthesis</keyword>
<keyword id="KW-1208">Phospholipid metabolism</keyword>
<evidence type="ECO:0000255" key="1">
    <source>
        <dbReference type="HAMAP-Rule" id="MF_00394"/>
    </source>
</evidence>
<accession>B0BAG9</accession>